<reference key="1">
    <citation type="journal article" date="1997" name="Proc. Natl. Acad. Sci. U.S.A.">
        <title>Identification and characterization of a conserved family of protein serine/threonine phosphatases homologous to Drosophila retinal degeneration C.</title>
        <authorList>
            <person name="Sherman P.M."/>
            <person name="Sun H."/>
            <person name="Macke J.P."/>
            <person name="Williams J."/>
            <person name="Smallwood P.M."/>
            <person name="Nathans J."/>
        </authorList>
    </citation>
    <scope>NUCLEOTIDE SEQUENCE [MRNA] (ISOFORMS PPEF-2(S) AND PPEF-2(L))</scope>
    <scope>VARIANT LEU-481</scope>
    <source>
        <tissue>Retina</tissue>
    </source>
</reference>
<reference key="2">
    <citation type="journal article" date="2005" name="Nature">
        <title>Generation and annotation of the DNA sequences of human chromosomes 2 and 4.</title>
        <authorList>
            <person name="Hillier L.W."/>
            <person name="Graves T.A."/>
            <person name="Fulton R.S."/>
            <person name="Fulton L.A."/>
            <person name="Pepin K.H."/>
            <person name="Minx P."/>
            <person name="Wagner-McPherson C."/>
            <person name="Layman D."/>
            <person name="Wylie K."/>
            <person name="Sekhon M."/>
            <person name="Becker M.C."/>
            <person name="Fewell G.A."/>
            <person name="Delehaunty K.D."/>
            <person name="Miner T.L."/>
            <person name="Nash W.E."/>
            <person name="Kremitzki C."/>
            <person name="Oddy L."/>
            <person name="Du H."/>
            <person name="Sun H."/>
            <person name="Bradshaw-Cordum H."/>
            <person name="Ali J."/>
            <person name="Carter J."/>
            <person name="Cordes M."/>
            <person name="Harris A."/>
            <person name="Isak A."/>
            <person name="van Brunt A."/>
            <person name="Nguyen C."/>
            <person name="Du F."/>
            <person name="Courtney L."/>
            <person name="Kalicki J."/>
            <person name="Ozersky P."/>
            <person name="Abbott S."/>
            <person name="Armstrong J."/>
            <person name="Belter E.A."/>
            <person name="Caruso L."/>
            <person name="Cedroni M."/>
            <person name="Cotton M."/>
            <person name="Davidson T."/>
            <person name="Desai A."/>
            <person name="Elliott G."/>
            <person name="Erb T."/>
            <person name="Fronick C."/>
            <person name="Gaige T."/>
            <person name="Haakenson W."/>
            <person name="Haglund K."/>
            <person name="Holmes A."/>
            <person name="Harkins R."/>
            <person name="Kim K."/>
            <person name="Kruchowski S.S."/>
            <person name="Strong C.M."/>
            <person name="Grewal N."/>
            <person name="Goyea E."/>
            <person name="Hou S."/>
            <person name="Levy A."/>
            <person name="Martinka S."/>
            <person name="Mead K."/>
            <person name="McLellan M.D."/>
            <person name="Meyer R."/>
            <person name="Randall-Maher J."/>
            <person name="Tomlinson C."/>
            <person name="Dauphin-Kohlberg S."/>
            <person name="Kozlowicz-Reilly A."/>
            <person name="Shah N."/>
            <person name="Swearengen-Shahid S."/>
            <person name="Snider J."/>
            <person name="Strong J.T."/>
            <person name="Thompson J."/>
            <person name="Yoakum M."/>
            <person name="Leonard S."/>
            <person name="Pearman C."/>
            <person name="Trani L."/>
            <person name="Radionenko M."/>
            <person name="Waligorski J.E."/>
            <person name="Wang C."/>
            <person name="Rock S.M."/>
            <person name="Tin-Wollam A.-M."/>
            <person name="Maupin R."/>
            <person name="Latreille P."/>
            <person name="Wendl M.C."/>
            <person name="Yang S.-P."/>
            <person name="Pohl C."/>
            <person name="Wallis J.W."/>
            <person name="Spieth J."/>
            <person name="Bieri T.A."/>
            <person name="Berkowicz N."/>
            <person name="Nelson J.O."/>
            <person name="Osborne J."/>
            <person name="Ding L."/>
            <person name="Meyer R."/>
            <person name="Sabo A."/>
            <person name="Shotland Y."/>
            <person name="Sinha P."/>
            <person name="Wohldmann P.E."/>
            <person name="Cook L.L."/>
            <person name="Hickenbotham M.T."/>
            <person name="Eldred J."/>
            <person name="Williams D."/>
            <person name="Jones T.A."/>
            <person name="She X."/>
            <person name="Ciccarelli F.D."/>
            <person name="Izaurralde E."/>
            <person name="Taylor J."/>
            <person name="Schmutz J."/>
            <person name="Myers R.M."/>
            <person name="Cox D.R."/>
            <person name="Huang X."/>
            <person name="McPherson J.D."/>
            <person name="Mardis E.R."/>
            <person name="Clifton S.W."/>
            <person name="Warren W.C."/>
            <person name="Chinwalla A.T."/>
            <person name="Eddy S.R."/>
            <person name="Marra M.A."/>
            <person name="Ovcharenko I."/>
            <person name="Furey T.S."/>
            <person name="Miller W."/>
            <person name="Eichler E.E."/>
            <person name="Bork P."/>
            <person name="Suyama M."/>
            <person name="Torrents D."/>
            <person name="Waterston R.H."/>
            <person name="Wilson R.K."/>
        </authorList>
    </citation>
    <scope>NUCLEOTIDE SEQUENCE [LARGE SCALE GENOMIC DNA]</scope>
</reference>
<name>PPE2_HUMAN</name>
<comment type="function">
    <text>May play a role in phototransduction. May dephosphorylate photoactivated rhodopsin. May function as a calcium sensing regulator of ionic currents, energy production or synaptic transmission.</text>
</comment>
<comment type="catalytic activity">
    <reaction>
        <text>O-phospho-L-seryl-[protein] + H2O = L-seryl-[protein] + phosphate</text>
        <dbReference type="Rhea" id="RHEA:20629"/>
        <dbReference type="Rhea" id="RHEA-COMP:9863"/>
        <dbReference type="Rhea" id="RHEA-COMP:11604"/>
        <dbReference type="ChEBI" id="CHEBI:15377"/>
        <dbReference type="ChEBI" id="CHEBI:29999"/>
        <dbReference type="ChEBI" id="CHEBI:43474"/>
        <dbReference type="ChEBI" id="CHEBI:83421"/>
        <dbReference type="EC" id="3.1.3.16"/>
    </reaction>
</comment>
<comment type="catalytic activity">
    <reaction>
        <text>O-phospho-L-threonyl-[protein] + H2O = L-threonyl-[protein] + phosphate</text>
        <dbReference type="Rhea" id="RHEA:47004"/>
        <dbReference type="Rhea" id="RHEA-COMP:11060"/>
        <dbReference type="Rhea" id="RHEA-COMP:11605"/>
        <dbReference type="ChEBI" id="CHEBI:15377"/>
        <dbReference type="ChEBI" id="CHEBI:30013"/>
        <dbReference type="ChEBI" id="CHEBI:43474"/>
        <dbReference type="ChEBI" id="CHEBI:61977"/>
        <dbReference type="EC" id="3.1.3.16"/>
    </reaction>
</comment>
<comment type="cofactor">
    <cofactor evidence="1">
        <name>Mn(2+)</name>
        <dbReference type="ChEBI" id="CHEBI:29035"/>
    </cofactor>
    <text evidence="1">Binds 2 manganese ions per subunit.</text>
</comment>
<comment type="activity regulation">
    <text evidence="1">Activated by calcium.</text>
</comment>
<comment type="interaction">
    <interactant intactId="EBI-2931306">
        <id>O14830</id>
    </interactant>
    <interactant intactId="EBI-397460">
        <id>P62204</id>
        <label>Calm3</label>
    </interactant>
    <organismsDiffer>true</organismsDiffer>
    <experiments>2</experiments>
</comment>
<comment type="subcellular location">
    <subcellularLocation>
        <location evidence="5">Cytoplasm</location>
    </subcellularLocation>
    <subcellularLocation>
        <location>Cell projection</location>
        <location>Cilium</location>
        <location>Photoreceptor outer segment</location>
    </subcellularLocation>
    <subcellularLocation>
        <location>Photoreceptor inner segment</location>
    </subcellularLocation>
    <text>Localized to photoreceptors, PPEF-2(L) is at least 2 fold more abundant in rod inner segments than in the outer segments.</text>
</comment>
<comment type="alternative products">
    <event type="alternative splicing"/>
    <isoform>
        <id>O14830-1</id>
        <name>PPEF-2(L)</name>
        <sequence type="displayed"/>
    </isoform>
    <isoform>
        <id>O14830-2</id>
        <name>PPEF-2(S)</name>
        <sequence type="described" ref="VSP_005103 VSP_005104"/>
    </isoform>
</comment>
<comment type="tissue specificity">
    <text>Retinal specific.</text>
</comment>
<comment type="similarity">
    <text evidence="5">Belongs to the PPP phosphatase family.</text>
</comment>
<accession>O14830</accession>
<accession>O14831</accession>
<keyword id="KW-0025">Alternative splicing</keyword>
<keyword id="KW-0106">Calcium</keyword>
<keyword id="KW-0966">Cell projection</keyword>
<keyword id="KW-0969">Cilium</keyword>
<keyword id="KW-0963">Cytoplasm</keyword>
<keyword id="KW-0378">Hydrolase</keyword>
<keyword id="KW-0464">Manganese</keyword>
<keyword id="KW-0479">Metal-binding</keyword>
<keyword id="KW-0904">Protein phosphatase</keyword>
<keyword id="KW-1267">Proteomics identification</keyword>
<keyword id="KW-1185">Reference proteome</keyword>
<keyword id="KW-0677">Repeat</keyword>
<keyword id="KW-0716">Sensory transduction</keyword>
<keyword id="KW-0844">Vision</keyword>
<sequence length="753" mass="86518">MGSGTSTQHHFAFQNAERAFKAAALIQRWYRRYVARLEMRRRCTWSIFQSIEYAGQQDQVKLHDFFSYLMDHFIPSSHNDRDFLTRIFTEDRFAQDSEMKKCSDYESIEVPDSYTGPRLSFPLLPDHATALVEAFRLKQQLHARYVLNLLYETKKHLVQLPNINRVSTCYSEEITVCGDLHGQLDDLIFIFYKNGLPSPERSYVFNGDFVDRGKDSVEILMILFAFMLVYPKEFHLNRGNHEDHMVNLRYGFTKEVMNKYKVHGKEILRTLQDVFCWLPLATLIDEKVLILHGGVSDITDLELLDKIERSKIVSTMRCKTRQKSEKQMEEKRRANQKSSAQGPIPWFLPESRSLPSSPLRLGSYKAQKTSRSSSIPCSGSLDGRELSRQVRSSVELELERCRQQAGLLVTGEKEEPSRSASEADSEAGELRKPTQEEWRQVVDILWSDPMAQEGCKANTIRGGGCYFGPDVTQQLLQKYNMQFLIRSHECKPEGYEFCHNRKVLTIFSASNYYEVGSNRGAYVKLGPALTPHIVQYQANKVTHTLTMRQRISRVEESALRALREKLFAHSSDLLSEFKKHDADKVGLITLSDWAAAVESVLHLGLPWRMLRPQLVNSSADNMLEYKSWLKNLAKEQLSRENIQSSLLETLYRNRSNLETIFRIIDSDHSGFISLDEFRQTWKLFSSHMNIDITDDCICDLARSIDFNKDGHIDINEFLEAFRLVEKSCPEGDASECPQATNAKDSGCSSPGAH</sequence>
<proteinExistence type="evidence at protein level"/>
<gene>
    <name type="primary">PPEF2</name>
</gene>
<dbReference type="EC" id="3.1.3.16"/>
<dbReference type="EMBL" id="AF023456">
    <property type="protein sequence ID" value="AAB82796.1"/>
    <property type="molecule type" value="mRNA"/>
</dbReference>
<dbReference type="EMBL" id="AF023457">
    <property type="protein sequence ID" value="AAB82797.1"/>
    <property type="molecule type" value="mRNA"/>
</dbReference>
<dbReference type="EMBL" id="AC110615">
    <property type="status" value="NOT_ANNOTATED_CDS"/>
    <property type="molecule type" value="Genomic_DNA"/>
</dbReference>
<dbReference type="CCDS" id="CCDS34013.1">
    <molecule id="O14830-1"/>
</dbReference>
<dbReference type="RefSeq" id="NP_006230.2">
    <molecule id="O14830-1"/>
    <property type="nucleotide sequence ID" value="NM_006239.2"/>
</dbReference>
<dbReference type="RefSeq" id="XP_011530341.1">
    <molecule id="O14830-1"/>
    <property type="nucleotide sequence ID" value="XM_011532039.3"/>
</dbReference>
<dbReference type="SMR" id="O14830"/>
<dbReference type="BioGRID" id="111466">
    <property type="interactions" value="28"/>
</dbReference>
<dbReference type="FunCoup" id="O14830">
    <property type="interactions" value="465"/>
</dbReference>
<dbReference type="IntAct" id="O14830">
    <property type="interactions" value="24"/>
</dbReference>
<dbReference type="MINT" id="O14830"/>
<dbReference type="STRING" id="9606.ENSP00000286719"/>
<dbReference type="DEPOD" id="PPEF2"/>
<dbReference type="iPTMnet" id="O14830"/>
<dbReference type="PhosphoSitePlus" id="O14830"/>
<dbReference type="BioMuta" id="PPEF2"/>
<dbReference type="MassIVE" id="O14830"/>
<dbReference type="PaxDb" id="9606-ENSP00000286719"/>
<dbReference type="PeptideAtlas" id="O14830"/>
<dbReference type="ProteomicsDB" id="48266">
    <molecule id="O14830-1"/>
</dbReference>
<dbReference type="ProteomicsDB" id="48267">
    <molecule id="O14830-2"/>
</dbReference>
<dbReference type="Antibodypedia" id="13410">
    <property type="antibodies" value="64 antibodies from 17 providers"/>
</dbReference>
<dbReference type="DNASU" id="5470"/>
<dbReference type="Ensembl" id="ENST00000286719.12">
    <molecule id="O14830-1"/>
    <property type="protein sequence ID" value="ENSP00000286719.6"/>
    <property type="gene ID" value="ENSG00000156194.19"/>
</dbReference>
<dbReference type="GeneID" id="5470"/>
<dbReference type="KEGG" id="hsa:5470"/>
<dbReference type="MANE-Select" id="ENST00000286719.12">
    <property type="protein sequence ID" value="ENSP00000286719.6"/>
    <property type="RefSeq nucleotide sequence ID" value="NM_006239.3"/>
    <property type="RefSeq protein sequence ID" value="NP_006230.2"/>
</dbReference>
<dbReference type="UCSC" id="uc003hix.4">
    <molecule id="O14830-1"/>
    <property type="organism name" value="human"/>
</dbReference>
<dbReference type="AGR" id="HGNC:9244"/>
<dbReference type="CTD" id="5470"/>
<dbReference type="GeneCards" id="PPEF2"/>
<dbReference type="HGNC" id="HGNC:9244">
    <property type="gene designation" value="PPEF2"/>
</dbReference>
<dbReference type="HPA" id="ENSG00000156194">
    <property type="expression patterns" value="Tissue enriched (retina)"/>
</dbReference>
<dbReference type="MIM" id="602256">
    <property type="type" value="gene"/>
</dbReference>
<dbReference type="neXtProt" id="NX_O14830"/>
<dbReference type="OpenTargets" id="ENSG00000156194"/>
<dbReference type="PharmGKB" id="PA33565"/>
<dbReference type="VEuPathDB" id="HostDB:ENSG00000156194"/>
<dbReference type="eggNOG" id="KOG0377">
    <property type="taxonomic scope" value="Eukaryota"/>
</dbReference>
<dbReference type="GeneTree" id="ENSGT00940000157870"/>
<dbReference type="HOGENOM" id="CLU_012603_1_0_1"/>
<dbReference type="InParanoid" id="O14830"/>
<dbReference type="OMA" id="CRENKVR"/>
<dbReference type="OrthoDB" id="442428at2759"/>
<dbReference type="PAN-GO" id="O14830">
    <property type="GO annotations" value="5 GO annotations based on evolutionary models"/>
</dbReference>
<dbReference type="PhylomeDB" id="O14830"/>
<dbReference type="TreeFam" id="TF313342"/>
<dbReference type="PathwayCommons" id="O14830"/>
<dbReference type="SignaLink" id="O14830"/>
<dbReference type="BioGRID-ORCS" id="5470">
    <property type="hits" value="9 hits in 1161 CRISPR screens"/>
</dbReference>
<dbReference type="ChiTaRS" id="PPEF2">
    <property type="organism name" value="human"/>
</dbReference>
<dbReference type="GenomeRNAi" id="5470"/>
<dbReference type="Pharos" id="O14830">
    <property type="development level" value="Tbio"/>
</dbReference>
<dbReference type="PRO" id="PR:O14830"/>
<dbReference type="Proteomes" id="UP000005640">
    <property type="component" value="Chromosome 4"/>
</dbReference>
<dbReference type="RNAct" id="O14830">
    <property type="molecule type" value="protein"/>
</dbReference>
<dbReference type="Bgee" id="ENSG00000156194">
    <property type="expression patterns" value="Expressed in male germ line stem cell (sensu Vertebrata) in testis and 93 other cell types or tissues"/>
</dbReference>
<dbReference type="ExpressionAtlas" id="O14830">
    <property type="expression patterns" value="baseline and differential"/>
</dbReference>
<dbReference type="GO" id="GO:0005829">
    <property type="term" value="C:cytosol"/>
    <property type="evidence" value="ECO:0000318"/>
    <property type="project" value="GO_Central"/>
</dbReference>
<dbReference type="GO" id="GO:0005634">
    <property type="term" value="C:nucleus"/>
    <property type="evidence" value="ECO:0000318"/>
    <property type="project" value="GO_Central"/>
</dbReference>
<dbReference type="GO" id="GO:0001917">
    <property type="term" value="C:photoreceptor inner segment"/>
    <property type="evidence" value="ECO:0007669"/>
    <property type="project" value="UniProtKB-SubCell"/>
</dbReference>
<dbReference type="GO" id="GO:0001750">
    <property type="term" value="C:photoreceptor outer segment"/>
    <property type="evidence" value="ECO:0007669"/>
    <property type="project" value="UniProtKB-SubCell"/>
</dbReference>
<dbReference type="GO" id="GO:0005509">
    <property type="term" value="F:calcium ion binding"/>
    <property type="evidence" value="ECO:0007669"/>
    <property type="project" value="InterPro"/>
</dbReference>
<dbReference type="GO" id="GO:0030544">
    <property type="term" value="F:Hsp70 protein binding"/>
    <property type="evidence" value="ECO:0000314"/>
    <property type="project" value="BHF-UCL"/>
</dbReference>
<dbReference type="GO" id="GO:0051879">
    <property type="term" value="F:Hsp90 protein binding"/>
    <property type="evidence" value="ECO:0000314"/>
    <property type="project" value="BHF-UCL"/>
</dbReference>
<dbReference type="GO" id="GO:0005506">
    <property type="term" value="F:iron ion binding"/>
    <property type="evidence" value="ECO:0007669"/>
    <property type="project" value="InterPro"/>
</dbReference>
<dbReference type="GO" id="GO:0030145">
    <property type="term" value="F:manganese ion binding"/>
    <property type="evidence" value="ECO:0007669"/>
    <property type="project" value="InterPro"/>
</dbReference>
<dbReference type="GO" id="GO:0031435">
    <property type="term" value="F:mitogen-activated protein kinase kinase kinase binding"/>
    <property type="evidence" value="ECO:0000353"/>
    <property type="project" value="BHF-UCL"/>
</dbReference>
<dbReference type="GO" id="GO:0030291">
    <property type="term" value="F:protein serine/threonine kinase inhibitor activity"/>
    <property type="evidence" value="ECO:0000314"/>
    <property type="project" value="BHF-UCL"/>
</dbReference>
<dbReference type="GO" id="GO:0004722">
    <property type="term" value="F:protein serine/threonine phosphatase activity"/>
    <property type="evidence" value="ECO:0000318"/>
    <property type="project" value="GO_Central"/>
</dbReference>
<dbReference type="GO" id="GO:0070301">
    <property type="term" value="P:cellular response to hydrogen peroxide"/>
    <property type="evidence" value="ECO:0000314"/>
    <property type="project" value="BHF-UCL"/>
</dbReference>
<dbReference type="GO" id="GO:0050906">
    <property type="term" value="P:detection of stimulus involved in sensory perception"/>
    <property type="evidence" value="ECO:0007669"/>
    <property type="project" value="InterPro"/>
</dbReference>
<dbReference type="GO" id="GO:2001234">
    <property type="term" value="P:negative regulation of apoptotic signaling pathway"/>
    <property type="evidence" value="ECO:0000314"/>
    <property type="project" value="BHF-UCL"/>
</dbReference>
<dbReference type="GO" id="GO:0043409">
    <property type="term" value="P:negative regulation of MAPK cascade"/>
    <property type="evidence" value="ECO:0000314"/>
    <property type="project" value="BHF-UCL"/>
</dbReference>
<dbReference type="GO" id="GO:0006470">
    <property type="term" value="P:protein dephosphorylation"/>
    <property type="evidence" value="ECO:0000304"/>
    <property type="project" value="ProtInc"/>
</dbReference>
<dbReference type="GO" id="GO:0007601">
    <property type="term" value="P:visual perception"/>
    <property type="evidence" value="ECO:0007669"/>
    <property type="project" value="UniProtKB-KW"/>
</dbReference>
<dbReference type="CDD" id="cd00051">
    <property type="entry name" value="EFh"/>
    <property type="match status" value="1"/>
</dbReference>
<dbReference type="CDD" id="cd23767">
    <property type="entry name" value="IQCD"/>
    <property type="match status" value="1"/>
</dbReference>
<dbReference type="CDD" id="cd07420">
    <property type="entry name" value="MPP_RdgC"/>
    <property type="match status" value="1"/>
</dbReference>
<dbReference type="FunFam" id="1.10.238.10:FF:000226">
    <property type="entry name" value="Serine/threonine-protein phosphatase with EF-hands"/>
    <property type="match status" value="1"/>
</dbReference>
<dbReference type="FunFam" id="3.60.21.10:FF:000042">
    <property type="entry name" value="Serine/threonine-protein phosphatase with EF-hands"/>
    <property type="match status" value="1"/>
</dbReference>
<dbReference type="FunFam" id="3.60.21.10:FF:000073">
    <property type="entry name" value="Serine/threonine-protein phosphatase with EF-hands"/>
    <property type="match status" value="1"/>
</dbReference>
<dbReference type="Gene3D" id="3.60.21.10">
    <property type="match status" value="2"/>
</dbReference>
<dbReference type="Gene3D" id="1.10.238.10">
    <property type="entry name" value="EF-hand"/>
    <property type="match status" value="1"/>
</dbReference>
<dbReference type="InterPro" id="IPR004843">
    <property type="entry name" value="Calcineurin-like_PHP_ApaH"/>
</dbReference>
<dbReference type="InterPro" id="IPR011992">
    <property type="entry name" value="EF-hand-dom_pair"/>
</dbReference>
<dbReference type="InterPro" id="IPR018247">
    <property type="entry name" value="EF_Hand_1_Ca_BS"/>
</dbReference>
<dbReference type="InterPro" id="IPR002048">
    <property type="entry name" value="EF_hand_dom"/>
</dbReference>
<dbReference type="InterPro" id="IPR029052">
    <property type="entry name" value="Metallo-depent_PP-like"/>
</dbReference>
<dbReference type="InterPro" id="IPR013235">
    <property type="entry name" value="PPP_dom"/>
</dbReference>
<dbReference type="InterPro" id="IPR051134">
    <property type="entry name" value="PPP_phosphatase"/>
</dbReference>
<dbReference type="InterPro" id="IPR012008">
    <property type="entry name" value="Ser/Thr-Pase_EF-hand_contain"/>
</dbReference>
<dbReference type="InterPro" id="IPR006186">
    <property type="entry name" value="Ser/Thr-sp_prot-phosphatase"/>
</dbReference>
<dbReference type="PANTHER" id="PTHR45668">
    <property type="entry name" value="SERINE/THREONINE-PROTEIN PHOSPHATASE 5-RELATED"/>
    <property type="match status" value="1"/>
</dbReference>
<dbReference type="PANTHER" id="PTHR45668:SF2">
    <property type="entry name" value="SERINE_THREONINE-PROTEIN PHOSPHATASE WITH EF-HANDS 2"/>
    <property type="match status" value="1"/>
</dbReference>
<dbReference type="Pfam" id="PF13499">
    <property type="entry name" value="EF-hand_7"/>
    <property type="match status" value="1"/>
</dbReference>
<dbReference type="Pfam" id="PF00149">
    <property type="entry name" value="Metallophos"/>
    <property type="match status" value="1"/>
</dbReference>
<dbReference type="Pfam" id="PF08321">
    <property type="entry name" value="PPP5"/>
    <property type="match status" value="1"/>
</dbReference>
<dbReference type="PIRSF" id="PIRSF000912">
    <property type="entry name" value="PPEF"/>
    <property type="match status" value="1"/>
</dbReference>
<dbReference type="PRINTS" id="PR00114">
    <property type="entry name" value="STPHPHTASE"/>
</dbReference>
<dbReference type="SMART" id="SM00054">
    <property type="entry name" value="EFh"/>
    <property type="match status" value="3"/>
</dbReference>
<dbReference type="SMART" id="SM00156">
    <property type="entry name" value="PP2Ac"/>
    <property type="match status" value="1"/>
</dbReference>
<dbReference type="SUPFAM" id="SSF47473">
    <property type="entry name" value="EF-hand"/>
    <property type="match status" value="1"/>
</dbReference>
<dbReference type="SUPFAM" id="SSF56300">
    <property type="entry name" value="Metallo-dependent phosphatases"/>
    <property type="match status" value="1"/>
</dbReference>
<dbReference type="PROSITE" id="PS00018">
    <property type="entry name" value="EF_HAND_1"/>
    <property type="match status" value="2"/>
</dbReference>
<dbReference type="PROSITE" id="PS50222">
    <property type="entry name" value="EF_HAND_2"/>
    <property type="match status" value="3"/>
</dbReference>
<dbReference type="PROSITE" id="PS00125">
    <property type="entry name" value="SER_THR_PHOSPHATASE"/>
    <property type="match status" value="1"/>
</dbReference>
<protein>
    <recommendedName>
        <fullName>Serine/threonine-protein phosphatase with EF-hands 2</fullName>
        <shortName>PPEF-2</shortName>
        <ecNumber>3.1.3.16</ecNumber>
    </recommendedName>
</protein>
<feature type="chain" id="PRO_0000058901" description="Serine/threonine-protein phosphatase with EF-hands 2">
    <location>
        <begin position="1"/>
        <end position="753"/>
    </location>
</feature>
<feature type="domain" description="IQ">
    <location>
        <begin position="21"/>
        <end position="46"/>
    </location>
</feature>
<feature type="domain" description="EF-hand 1" evidence="2">
    <location>
        <begin position="568"/>
        <end position="603"/>
    </location>
</feature>
<feature type="domain" description="EF-hand 2" evidence="2">
    <location>
        <begin position="652"/>
        <end position="687"/>
    </location>
</feature>
<feature type="domain" description="EF-hand 3" evidence="2">
    <location>
        <begin position="692"/>
        <end position="727"/>
    </location>
</feature>
<feature type="region of interest" description="Catalytic">
    <location>
        <begin position="128"/>
        <end position="540"/>
    </location>
</feature>
<feature type="region of interest" description="Disordered" evidence="3">
    <location>
        <begin position="318"/>
        <end position="382"/>
    </location>
</feature>
<feature type="region of interest" description="Disordered" evidence="3">
    <location>
        <begin position="409"/>
        <end position="435"/>
    </location>
</feature>
<feature type="region of interest" description="Disordered" evidence="3">
    <location>
        <begin position="732"/>
        <end position="753"/>
    </location>
</feature>
<feature type="compositionally biased region" description="Basic and acidic residues" evidence="3">
    <location>
        <begin position="322"/>
        <end position="333"/>
    </location>
</feature>
<feature type="compositionally biased region" description="Low complexity" evidence="3">
    <location>
        <begin position="348"/>
        <end position="361"/>
    </location>
</feature>
<feature type="compositionally biased region" description="Polar residues" evidence="3">
    <location>
        <begin position="366"/>
        <end position="377"/>
    </location>
</feature>
<feature type="compositionally biased region" description="Polar residues" evidence="3">
    <location>
        <begin position="737"/>
        <end position="753"/>
    </location>
</feature>
<feature type="active site" description="Proton donor" evidence="1">
    <location>
        <position position="241"/>
    </location>
</feature>
<feature type="binding site" evidence="1">
    <location>
        <position position="179"/>
    </location>
    <ligand>
        <name>Mn(2+)</name>
        <dbReference type="ChEBI" id="CHEBI:29035"/>
        <label>1</label>
    </ligand>
</feature>
<feature type="binding site" evidence="1">
    <location>
        <position position="181"/>
    </location>
    <ligand>
        <name>Mn(2+)</name>
        <dbReference type="ChEBI" id="CHEBI:29035"/>
        <label>1</label>
    </ligand>
</feature>
<feature type="binding site" evidence="1">
    <location>
        <position position="208"/>
    </location>
    <ligand>
        <name>Mn(2+)</name>
        <dbReference type="ChEBI" id="CHEBI:29035"/>
        <label>1</label>
    </ligand>
</feature>
<feature type="binding site" evidence="1">
    <location>
        <position position="208"/>
    </location>
    <ligand>
        <name>Mn(2+)</name>
        <dbReference type="ChEBI" id="CHEBI:29035"/>
        <label>2</label>
    </ligand>
</feature>
<feature type="binding site" evidence="1">
    <location>
        <position position="240"/>
    </location>
    <ligand>
        <name>Mn(2+)</name>
        <dbReference type="ChEBI" id="CHEBI:29035"/>
        <label>2</label>
    </ligand>
</feature>
<feature type="binding site" evidence="1">
    <location>
        <position position="292"/>
    </location>
    <ligand>
        <name>Mn(2+)</name>
        <dbReference type="ChEBI" id="CHEBI:29035"/>
        <label>2</label>
    </ligand>
</feature>
<feature type="binding site" evidence="1">
    <location>
        <position position="488"/>
    </location>
    <ligand>
        <name>Mn(2+)</name>
        <dbReference type="ChEBI" id="CHEBI:29035"/>
        <label>2</label>
    </ligand>
</feature>
<feature type="binding site" evidence="2">
    <location>
        <position position="665"/>
    </location>
    <ligand>
        <name>Ca(2+)</name>
        <dbReference type="ChEBI" id="CHEBI:29108"/>
        <label>1</label>
    </ligand>
</feature>
<feature type="binding site" evidence="2">
    <location>
        <position position="667"/>
    </location>
    <ligand>
        <name>Ca(2+)</name>
        <dbReference type="ChEBI" id="CHEBI:29108"/>
        <label>1</label>
    </ligand>
</feature>
<feature type="binding site" evidence="2">
    <location>
        <position position="669"/>
    </location>
    <ligand>
        <name>Ca(2+)</name>
        <dbReference type="ChEBI" id="CHEBI:29108"/>
        <label>1</label>
    </ligand>
</feature>
<feature type="binding site" evidence="2">
    <location>
        <position position="676"/>
    </location>
    <ligand>
        <name>Ca(2+)</name>
        <dbReference type="ChEBI" id="CHEBI:29108"/>
        <label>1</label>
    </ligand>
</feature>
<feature type="binding site" evidence="2">
    <location>
        <position position="705"/>
    </location>
    <ligand>
        <name>Ca(2+)</name>
        <dbReference type="ChEBI" id="CHEBI:29108"/>
        <label>2</label>
    </ligand>
</feature>
<feature type="binding site" evidence="2">
    <location>
        <position position="707"/>
    </location>
    <ligand>
        <name>Ca(2+)</name>
        <dbReference type="ChEBI" id="CHEBI:29108"/>
        <label>2</label>
    </ligand>
</feature>
<feature type="binding site" evidence="2">
    <location>
        <position position="709"/>
    </location>
    <ligand>
        <name>Ca(2+)</name>
        <dbReference type="ChEBI" id="CHEBI:29108"/>
        <label>2</label>
    </ligand>
</feature>
<feature type="binding site" evidence="2">
    <location>
        <position position="711"/>
    </location>
    <ligand>
        <name>Ca(2+)</name>
        <dbReference type="ChEBI" id="CHEBI:29108"/>
        <label>2</label>
    </ligand>
</feature>
<feature type="binding site" evidence="2">
    <location>
        <position position="716"/>
    </location>
    <ligand>
        <name>Ca(2+)</name>
        <dbReference type="ChEBI" id="CHEBI:29108"/>
        <label>2</label>
    </ligand>
</feature>
<feature type="splice variant" id="VSP_005103" description="In isoform PPEF-2(S)." evidence="5">
    <original>ITLSDWAAAVE</original>
    <variation>ASSQLCYYQQK</variation>
    <location>
        <begin position="588"/>
        <end position="598"/>
    </location>
</feature>
<feature type="splice variant" id="VSP_005104" description="In isoform PPEF-2(S)." evidence="5">
    <location>
        <begin position="599"/>
        <end position="753"/>
    </location>
</feature>
<feature type="sequence variant" id="VAR_010230">
    <original>S</original>
    <variation>R</variation>
    <location>
        <position position="120"/>
    </location>
</feature>
<feature type="sequence variant" id="VAR_055121" description="In dbSNP:rs34097437.">
    <original>V</original>
    <variation>L</variation>
    <location>
        <position position="394"/>
    </location>
</feature>
<feature type="sequence variant" id="VAR_055122" description="In dbSNP:rs35599561.">
    <original>E</original>
    <variation>K</variation>
    <location>
        <position position="412"/>
    </location>
</feature>
<feature type="sequence variant" id="VAR_061759" description="In dbSNP:rs6858658." evidence="4">
    <original>M</original>
    <variation>L</variation>
    <location>
        <position position="481"/>
    </location>
</feature>
<feature type="sequence variant" id="VAR_055123" description="In dbSNP:rs34155925.">
    <original>R</original>
    <variation>K</variation>
    <location>
        <position position="553"/>
    </location>
</feature>
<feature type="sequence variant" id="VAR_055124" description="In dbSNP:rs17000961.">
    <original>S</original>
    <variation>C</variation>
    <location>
        <position position="575"/>
    </location>
</feature>
<feature type="sequence conflict" description="In Ref. 1; AAB82796/AAB82797." evidence="5" ref="1">
    <original>R</original>
    <variation>S</variation>
    <location>
        <position position="118"/>
    </location>
</feature>
<organism>
    <name type="scientific">Homo sapiens</name>
    <name type="common">Human</name>
    <dbReference type="NCBI Taxonomy" id="9606"/>
    <lineage>
        <taxon>Eukaryota</taxon>
        <taxon>Metazoa</taxon>
        <taxon>Chordata</taxon>
        <taxon>Craniata</taxon>
        <taxon>Vertebrata</taxon>
        <taxon>Euteleostomi</taxon>
        <taxon>Mammalia</taxon>
        <taxon>Eutheria</taxon>
        <taxon>Euarchontoglires</taxon>
        <taxon>Primates</taxon>
        <taxon>Haplorrhini</taxon>
        <taxon>Catarrhini</taxon>
        <taxon>Hominidae</taxon>
        <taxon>Homo</taxon>
    </lineage>
</organism>
<evidence type="ECO:0000250" key="1"/>
<evidence type="ECO:0000255" key="2">
    <source>
        <dbReference type="PROSITE-ProRule" id="PRU00448"/>
    </source>
</evidence>
<evidence type="ECO:0000256" key="3">
    <source>
        <dbReference type="SAM" id="MobiDB-lite"/>
    </source>
</evidence>
<evidence type="ECO:0000269" key="4">
    <source>
    </source>
</evidence>
<evidence type="ECO:0000305" key="5"/>